<evidence type="ECO:0000250" key="1"/>
<evidence type="ECO:0000255" key="2"/>
<evidence type="ECO:0000256" key="3">
    <source>
        <dbReference type="SAM" id="MobiDB-lite"/>
    </source>
</evidence>
<evidence type="ECO:0000269" key="4">
    <source>
    </source>
</evidence>
<evidence type="ECO:0000303" key="5">
    <source>
    </source>
</evidence>
<evidence type="ECO:0000305" key="6"/>
<evidence type="ECO:0000312" key="7">
    <source>
        <dbReference type="HGNC" id="HGNC:6338"/>
    </source>
</evidence>
<evidence type="ECO:0007829" key="8">
    <source>
        <dbReference type="PDB" id="3VH8"/>
    </source>
</evidence>
<evidence type="ECO:0007829" key="9">
    <source>
        <dbReference type="PDB" id="3WUW"/>
    </source>
</evidence>
<evidence type="ECO:0007829" key="10">
    <source>
        <dbReference type="PDB" id="7K80"/>
    </source>
</evidence>
<evidence type="ECO:0007829" key="11">
    <source>
        <dbReference type="PDB" id="7K81"/>
    </source>
</evidence>
<evidence type="ECO:0007829" key="12">
    <source>
        <dbReference type="PDB" id="9BL3"/>
    </source>
</evidence>
<evidence type="ECO:0007829" key="13">
    <source>
        <dbReference type="PDB" id="9BL9"/>
    </source>
</evidence>
<protein>
    <recommendedName>
        <fullName evidence="6">Killer cell immunoglobulin-like receptor 3DL1</fullName>
    </recommendedName>
    <alternativeName>
        <fullName>CD158 antigen-like family member E</fullName>
    </alternativeName>
    <alternativeName>
        <fullName>HLA-BW4-specific inhibitory NK cell receptor</fullName>
    </alternativeName>
    <alternativeName>
        <fullName>Natural killer-associated transcript 3</fullName>
        <shortName>NKAT-3</shortName>
    </alternativeName>
    <alternativeName>
        <fullName>p70 natural killer cell receptor clones CL-2/CL-11</fullName>
        <shortName>p70 NK receptor CL-2/CL-11</shortName>
    </alternativeName>
    <cdAntigenName>CD158e</cdAntigenName>
</protein>
<comment type="function">
    <text evidence="4">Receptor on natural killer (NK) cells for HLA Bw4 allele. Inhibits the activity of NK cells thus preventing cell lysis.</text>
</comment>
<comment type="interaction">
    <interactant intactId="EBI-3910993">
        <id>P43629</id>
    </interactant>
    <interactant intactId="EBI-3922513">
        <id>O95393</id>
        <label>BMP10</label>
    </interactant>
    <organismsDiffer>false</organismsDiffer>
    <experiments>3</experiments>
</comment>
<comment type="interaction">
    <interactant intactId="EBI-3910993">
        <id>P43629</id>
    </interactant>
    <interactant intactId="EBI-10973142">
        <id>Q9NRY5</id>
        <label>FAM114A2</label>
    </interactant>
    <organismsDiffer>false</organismsDiffer>
    <experiments>2</experiments>
</comment>
<comment type="interaction">
    <interactant intactId="EBI-3910993">
        <id>P43629</id>
    </interactant>
    <interactant intactId="EBI-1046513">
        <id>P01889</id>
        <label>HLA-B</label>
    </interactant>
    <organismsDiffer>false</organismsDiffer>
    <experiments>3</experiments>
</comment>
<comment type="interaction">
    <interactant intactId="EBI-3910993">
        <id>P43629</id>
    </interactant>
    <interactant intactId="EBI-2811134">
        <id>P30511</id>
        <label>HLA-F</label>
    </interactant>
    <organismsDiffer>false</organismsDiffer>
    <experiments>3</experiments>
</comment>
<comment type="interaction">
    <interactant intactId="EBI-3910993">
        <id>P43629</id>
    </interactant>
    <interactant intactId="EBI-8640191">
        <id>Q9NRQ5</id>
        <label>SMCO4</label>
    </interactant>
    <organismsDiffer>false</organismsDiffer>
    <experiments>3</experiments>
</comment>
<comment type="interaction">
    <interactant intactId="EBI-3910993">
        <id>P43629</id>
    </interactant>
    <interactant intactId="EBI-311394">
        <id>Q9C0I4</id>
        <label>THSD7B</label>
    </interactant>
    <organismsDiffer>false</organismsDiffer>
    <experiments>3</experiments>
</comment>
<comment type="subcellular location">
    <subcellularLocation>
        <location>Cell membrane</location>
        <topology>Single-pass type I membrane protein</topology>
    </subcellularLocation>
</comment>
<comment type="alternative products">
    <event type="alternative splicing"/>
    <isoform>
        <id>P43629-1</id>
        <name>1</name>
        <sequence type="displayed"/>
    </isoform>
    <isoform>
        <id>P43629-2</id>
        <name>2</name>
        <sequence type="described" ref="VSP_047633"/>
    </isoform>
</comment>
<comment type="domain">
    <text evidence="4">Ig-like C2-type domain 2 mediates specificity through recognition of the Bw4 epitope.</text>
</comment>
<comment type="similarity">
    <text evidence="6">Belongs to the immunoglobulin superfamily.</text>
</comment>
<name>KI3L1_HUMAN</name>
<accession>P43629</accession>
<accession>O43473</accession>
<accession>Q14946</accession>
<accession>Q16541</accession>
<dbReference type="EMBL" id="L41269">
    <property type="protein sequence ID" value="AAA69870.1"/>
    <property type="molecule type" value="mRNA"/>
</dbReference>
<dbReference type="EMBL" id="U30273">
    <property type="protein sequence ID" value="AAB52521.1"/>
    <property type="molecule type" value="mRNA"/>
</dbReference>
<dbReference type="EMBL" id="U30274">
    <property type="protein sequence ID" value="AAB52522.1"/>
    <property type="molecule type" value="mRNA"/>
</dbReference>
<dbReference type="EMBL" id="X94262">
    <property type="protein sequence ID" value="CAA63938.1"/>
    <property type="molecule type" value="mRNA"/>
</dbReference>
<dbReference type="EMBL" id="U31416">
    <property type="protein sequence ID" value="AAC23725.1"/>
    <property type="molecule type" value="mRNA"/>
</dbReference>
<dbReference type="EMBL" id="AF022049">
    <property type="protein sequence ID" value="AAB95322.1"/>
    <property type="molecule type" value="mRNA"/>
</dbReference>
<dbReference type="EMBL" id="L76664">
    <property type="protein sequence ID" value="AAB36592.1"/>
    <property type="molecule type" value="mRNA"/>
</dbReference>
<dbReference type="EMBL" id="AC006293">
    <property type="status" value="NOT_ANNOTATED_CDS"/>
    <property type="molecule type" value="Genomic_DNA"/>
</dbReference>
<dbReference type="EMBL" id="AC011501">
    <property type="status" value="NOT_ANNOTATED_CDS"/>
    <property type="molecule type" value="Genomic_DNA"/>
</dbReference>
<dbReference type="CCDS" id="CCDS42621.1">
    <molecule id="P43629-1"/>
</dbReference>
<dbReference type="PIR" id="G01924">
    <property type="entry name" value="G01924"/>
</dbReference>
<dbReference type="PIR" id="G01925">
    <property type="entry name" value="G01925"/>
</dbReference>
<dbReference type="RefSeq" id="NP_001309097.1">
    <property type="nucleotide sequence ID" value="NM_001322168.1"/>
</dbReference>
<dbReference type="RefSeq" id="NP_037421.2">
    <molecule id="P43629-1"/>
    <property type="nucleotide sequence ID" value="NM_013289.4"/>
</dbReference>
<dbReference type="PDB" id="3VH8">
    <property type="method" value="X-ray"/>
    <property type="resolution" value="1.80 A"/>
    <property type="chains" value="G/H=22-320"/>
</dbReference>
<dbReference type="PDB" id="3WUW">
    <property type="method" value="X-ray"/>
    <property type="resolution" value="2.00 A"/>
    <property type="chains" value="G=28-313"/>
</dbReference>
<dbReference type="PDB" id="5B38">
    <property type="method" value="X-ray"/>
    <property type="resolution" value="2.30 A"/>
    <property type="chains" value="G=22-320"/>
</dbReference>
<dbReference type="PDB" id="5B39">
    <property type="method" value="X-ray"/>
    <property type="resolution" value="2.50 A"/>
    <property type="chains" value="G=22-320"/>
</dbReference>
<dbReference type="PDB" id="5T6Z">
    <property type="method" value="X-ray"/>
    <property type="resolution" value="2.00 A"/>
    <property type="chains" value="G=22-320"/>
</dbReference>
<dbReference type="PDB" id="5T70">
    <property type="method" value="X-ray"/>
    <property type="resolution" value="2.10 A"/>
    <property type="chains" value="G=22-320"/>
</dbReference>
<dbReference type="PDB" id="6V3J">
    <property type="method" value="X-ray"/>
    <property type="resolution" value="1.98 A"/>
    <property type="chains" value="G=22-320"/>
</dbReference>
<dbReference type="PDB" id="7K80">
    <property type="method" value="X-ray"/>
    <property type="resolution" value="2.40 A"/>
    <property type="chains" value="G/H=22-320"/>
</dbReference>
<dbReference type="PDB" id="7K81">
    <property type="method" value="X-ray"/>
    <property type="resolution" value="2.00 A"/>
    <property type="chains" value="G=27-315"/>
</dbReference>
<dbReference type="PDB" id="9BL2">
    <property type="method" value="X-ray"/>
    <property type="resolution" value="2.10 A"/>
    <property type="chains" value="G=22-320"/>
</dbReference>
<dbReference type="PDB" id="9BL3">
    <property type="method" value="X-ray"/>
    <property type="resolution" value="2.00 A"/>
    <property type="chains" value="G=22-320"/>
</dbReference>
<dbReference type="PDB" id="9BL4">
    <property type="method" value="X-ray"/>
    <property type="resolution" value="1.75 A"/>
    <property type="chains" value="G=22-320"/>
</dbReference>
<dbReference type="PDB" id="9BL5">
    <property type="method" value="X-ray"/>
    <property type="resolution" value="2.00 A"/>
    <property type="chains" value="G=22-320"/>
</dbReference>
<dbReference type="PDB" id="9BL6">
    <property type="method" value="X-ray"/>
    <property type="resolution" value="2.40 A"/>
    <property type="chains" value="G=22-320"/>
</dbReference>
<dbReference type="PDB" id="9BL9">
    <property type="method" value="X-ray"/>
    <property type="resolution" value="2.60 A"/>
    <property type="chains" value="G=22-320"/>
</dbReference>
<dbReference type="PDB" id="9BLA">
    <property type="method" value="X-ray"/>
    <property type="resolution" value="3.00 A"/>
    <property type="chains" value="G=22-320"/>
</dbReference>
<dbReference type="PDBsum" id="3VH8"/>
<dbReference type="PDBsum" id="3WUW"/>
<dbReference type="PDBsum" id="5B38"/>
<dbReference type="PDBsum" id="5B39"/>
<dbReference type="PDBsum" id="5T6Z"/>
<dbReference type="PDBsum" id="5T70"/>
<dbReference type="PDBsum" id="6V3J"/>
<dbReference type="PDBsum" id="7K80"/>
<dbReference type="PDBsum" id="7K81"/>
<dbReference type="PDBsum" id="9BL2"/>
<dbReference type="PDBsum" id="9BL3"/>
<dbReference type="PDBsum" id="9BL4"/>
<dbReference type="PDBsum" id="9BL5"/>
<dbReference type="PDBsum" id="9BL6"/>
<dbReference type="PDBsum" id="9BL9"/>
<dbReference type="PDBsum" id="9BLA"/>
<dbReference type="SMR" id="P43629"/>
<dbReference type="BioGRID" id="110012">
    <property type="interactions" value="12"/>
</dbReference>
<dbReference type="FunCoup" id="P43629">
    <property type="interactions" value="283"/>
</dbReference>
<dbReference type="IntAct" id="P43629">
    <property type="interactions" value="15"/>
</dbReference>
<dbReference type="STRING" id="9606.ENSP00000375608"/>
<dbReference type="GlyCosmos" id="P43629">
    <property type="glycosylation" value="3 sites, No reported glycans"/>
</dbReference>
<dbReference type="GlyGen" id="P43629">
    <property type="glycosylation" value="4 sites"/>
</dbReference>
<dbReference type="iPTMnet" id="P43629"/>
<dbReference type="PhosphoSitePlus" id="P43629"/>
<dbReference type="BioMuta" id="KIR3DL1"/>
<dbReference type="DMDM" id="1171728"/>
<dbReference type="jPOST" id="P43629"/>
<dbReference type="MassIVE" id="P43629"/>
<dbReference type="PaxDb" id="9606-ENSP00000375608"/>
<dbReference type="PeptideAtlas" id="P43629"/>
<dbReference type="ProteomicsDB" id="55643">
    <molecule id="P43629-1"/>
</dbReference>
<dbReference type="ProteomicsDB" id="60254"/>
<dbReference type="Antibodypedia" id="34883">
    <property type="antibodies" value="547 antibodies from 34 providers"/>
</dbReference>
<dbReference type="DNASU" id="3811"/>
<dbReference type="Ensembl" id="ENST00000358178.4">
    <molecule id="P43629-2"/>
    <property type="protein sequence ID" value="ENSP00000350901.4"/>
    <property type="gene ID" value="ENSG00000167633.18"/>
</dbReference>
<dbReference type="Ensembl" id="ENST00000391728.8">
    <molecule id="P43629-1"/>
    <property type="protein sequence ID" value="ENSP00000375608.4"/>
    <property type="gene ID" value="ENSG00000167633.18"/>
</dbReference>
<dbReference type="Ensembl" id="ENST00000612668.4">
    <molecule id="P43629-1"/>
    <property type="protein sequence ID" value="ENSP00000484488.1"/>
    <property type="gene ID" value="ENSG00000274036.5"/>
</dbReference>
<dbReference type="Ensembl" id="ENST00000616188.4">
    <molecule id="P43629-1"/>
    <property type="protein sequence ID" value="ENSP00000484036.1"/>
    <property type="gene ID" value="ENSG00000275288.6"/>
</dbReference>
<dbReference type="Ensembl" id="ENST00000621353.4">
    <molecule id="P43629-1"/>
    <property type="protein sequence ID" value="ENSP00000484972.1"/>
    <property type="gene ID" value="ENSG00000276423.6"/>
</dbReference>
<dbReference type="Ensembl" id="ENST00000639353.2">
    <molecule id="P43629-1"/>
    <property type="protein sequence ID" value="ENSP00000492794.1"/>
    <property type="gene ID" value="ENSG00000284342.2"/>
</dbReference>
<dbReference type="Ensembl" id="ENST00000639813.1">
    <molecule id="P43629-2"/>
    <property type="protein sequence ID" value="ENSP00000492173.1"/>
    <property type="gene ID" value="ENSG00000284426.1"/>
</dbReference>
<dbReference type="Ensembl" id="ENST00000640111.2">
    <molecule id="P43629-2"/>
    <property type="protein sequence ID" value="ENSP00000491437.2"/>
    <property type="gene ID" value="ENSG00000284342.2"/>
</dbReference>
<dbReference type="Ensembl" id="ENST00000640788.1">
    <molecule id="P43629-1"/>
    <property type="protein sequence ID" value="ENSP00000491550.1"/>
    <property type="gene ID" value="ENSG00000284426.1"/>
</dbReference>
<dbReference type="GeneID" id="3811"/>
<dbReference type="KEGG" id="hsa:3811"/>
<dbReference type="MANE-Select" id="ENST00000391728.8">
    <property type="protein sequence ID" value="ENSP00000375608.4"/>
    <property type="RefSeq nucleotide sequence ID" value="NM_013289.4"/>
    <property type="RefSeq protein sequence ID" value="NP_037421.2"/>
</dbReference>
<dbReference type="UCSC" id="uc010esf.4">
    <molecule id="P43629-1"/>
    <property type="organism name" value="human"/>
</dbReference>
<dbReference type="AGR" id="HGNC:6338"/>
<dbReference type="CTD" id="3811"/>
<dbReference type="DisGeNET" id="3811"/>
<dbReference type="GeneCards" id="KIR3DL1"/>
<dbReference type="HGNC" id="HGNC:6338">
    <property type="gene designation" value="KIR3DL1"/>
</dbReference>
<dbReference type="HPA" id="ENSG00000167633">
    <property type="expression patterns" value="Tissue enhanced (lymphoid)"/>
</dbReference>
<dbReference type="MalaCards" id="KIR3DL1"/>
<dbReference type="MIM" id="604946">
    <property type="type" value="gene"/>
</dbReference>
<dbReference type="neXtProt" id="NX_P43629"/>
<dbReference type="OpenTargets" id="ENSG00000167633"/>
<dbReference type="PharmGKB" id="PA30123"/>
<dbReference type="VEuPathDB" id="HostDB:ENSG00000167633"/>
<dbReference type="eggNOG" id="ENOG502RU21">
    <property type="taxonomic scope" value="Eukaryota"/>
</dbReference>
<dbReference type="GeneTree" id="ENSGT01100000263478"/>
<dbReference type="InParanoid" id="P43629"/>
<dbReference type="OMA" id="PELHGHH"/>
<dbReference type="OrthoDB" id="9613897at2759"/>
<dbReference type="PAN-GO" id="P43629">
    <property type="GO annotations" value="1 GO annotation based on evolutionary models"/>
</dbReference>
<dbReference type="PhylomeDB" id="P43629"/>
<dbReference type="TreeFam" id="TF352669"/>
<dbReference type="PathwayCommons" id="P43629"/>
<dbReference type="Reactome" id="R-HSA-198933">
    <property type="pathway name" value="Immunoregulatory interactions between a Lymphoid and a non-Lymphoid cell"/>
</dbReference>
<dbReference type="SignaLink" id="P43629"/>
<dbReference type="SIGNOR" id="P43629"/>
<dbReference type="BioGRID-ORCS" id="3811">
    <property type="hits" value="13 hits in 1144 CRISPR screens"/>
</dbReference>
<dbReference type="EvolutionaryTrace" id="P43629"/>
<dbReference type="GeneWiki" id="KIR3DL1"/>
<dbReference type="GenomeRNAi" id="3811"/>
<dbReference type="Pharos" id="P43629">
    <property type="development level" value="Tbio"/>
</dbReference>
<dbReference type="PRO" id="PR:P43629"/>
<dbReference type="Proteomes" id="UP000005640">
    <property type="component" value="Chromosome 19"/>
</dbReference>
<dbReference type="RNAct" id="P43629">
    <property type="molecule type" value="protein"/>
</dbReference>
<dbReference type="Bgee" id="ENSG00000167633">
    <property type="expression patterns" value="Expressed in granulocyte and 34 other cell types or tissues"/>
</dbReference>
<dbReference type="ExpressionAtlas" id="P43629">
    <property type="expression patterns" value="baseline and differential"/>
</dbReference>
<dbReference type="GO" id="GO:0005886">
    <property type="term" value="C:plasma membrane"/>
    <property type="evidence" value="ECO:0000318"/>
    <property type="project" value="GO_Central"/>
</dbReference>
<dbReference type="GO" id="GO:0030109">
    <property type="term" value="F:HLA-B specific inhibitory MHC class I receptor activity"/>
    <property type="evidence" value="ECO:0000303"/>
    <property type="project" value="UniProtKB"/>
</dbReference>
<dbReference type="GO" id="GO:0060090">
    <property type="term" value="F:molecular adaptor activity"/>
    <property type="evidence" value="ECO:0000269"/>
    <property type="project" value="DisProt"/>
</dbReference>
<dbReference type="GO" id="GO:0006955">
    <property type="term" value="P:immune response"/>
    <property type="evidence" value="ECO:0000303"/>
    <property type="project" value="UniProtKB"/>
</dbReference>
<dbReference type="GO" id="GO:0002764">
    <property type="term" value="P:immune response-regulating signaling pathway"/>
    <property type="evidence" value="ECO:0000318"/>
    <property type="project" value="GO_Central"/>
</dbReference>
<dbReference type="GO" id="GO:0042267">
    <property type="term" value="P:natural killer cell mediated cytotoxicity"/>
    <property type="evidence" value="ECO:0000315"/>
    <property type="project" value="UniProtKB"/>
</dbReference>
<dbReference type="CDD" id="cd05711">
    <property type="entry name" value="IgC2_D2_LILR_KIR_like"/>
    <property type="match status" value="2"/>
</dbReference>
<dbReference type="DisProt" id="DP02552"/>
<dbReference type="FunFam" id="2.60.40.10:FF:000033">
    <property type="entry name" value="Killer cell immunoglobulin-like receptor"/>
    <property type="match status" value="2"/>
</dbReference>
<dbReference type="FunFam" id="2.60.40.10:FF:000049">
    <property type="entry name" value="Leukocyte immunoglobulin-like receptor subfamily B member 1"/>
    <property type="match status" value="1"/>
</dbReference>
<dbReference type="Gene3D" id="2.60.40.10">
    <property type="entry name" value="Immunoglobulins"/>
    <property type="match status" value="3"/>
</dbReference>
<dbReference type="InterPro" id="IPR036179">
    <property type="entry name" value="Ig-like_dom_sf"/>
</dbReference>
<dbReference type="InterPro" id="IPR013783">
    <property type="entry name" value="Ig-like_fold"/>
</dbReference>
<dbReference type="InterPro" id="IPR050412">
    <property type="entry name" value="Ig-like_Receptors_ImmuneReg"/>
</dbReference>
<dbReference type="InterPro" id="IPR003599">
    <property type="entry name" value="Ig_sub"/>
</dbReference>
<dbReference type="InterPro" id="IPR013151">
    <property type="entry name" value="Immunoglobulin_dom"/>
</dbReference>
<dbReference type="PANTHER" id="PTHR11738:SF166">
    <property type="entry name" value="KILLER CELL IMMUNOGLOBULIN-LIKE RECEPTOR 3DL1-RELATED"/>
    <property type="match status" value="1"/>
</dbReference>
<dbReference type="PANTHER" id="PTHR11738">
    <property type="entry name" value="MHC CLASS I NK CELL RECEPTOR"/>
    <property type="match status" value="1"/>
</dbReference>
<dbReference type="Pfam" id="PF00047">
    <property type="entry name" value="ig"/>
    <property type="match status" value="3"/>
</dbReference>
<dbReference type="SMART" id="SM00409">
    <property type="entry name" value="IG"/>
    <property type="match status" value="3"/>
</dbReference>
<dbReference type="SUPFAM" id="SSF48726">
    <property type="entry name" value="Immunoglobulin"/>
    <property type="match status" value="3"/>
</dbReference>
<keyword id="KW-0002">3D-structure</keyword>
<keyword id="KW-0025">Alternative splicing</keyword>
<keyword id="KW-1003">Cell membrane</keyword>
<keyword id="KW-1015">Disulfide bond</keyword>
<keyword id="KW-0325">Glycoprotein</keyword>
<keyword id="KW-0393">Immunoglobulin domain</keyword>
<keyword id="KW-0472">Membrane</keyword>
<keyword id="KW-1267">Proteomics identification</keyword>
<keyword id="KW-0675">Receptor</keyword>
<keyword id="KW-1185">Reference proteome</keyword>
<keyword id="KW-0677">Repeat</keyword>
<keyword id="KW-0732">Signal</keyword>
<keyword id="KW-0812">Transmembrane</keyword>
<keyword id="KW-1133">Transmembrane helix</keyword>
<reference key="1">
    <citation type="journal article" date="1995" name="Science">
        <title>Cloning of immunoglobulin-superfamily members associated with HLA-C and HLA-B recognition by human natural killer cells.</title>
        <authorList>
            <person name="Colonna M."/>
            <person name="Samaridis J."/>
        </authorList>
    </citation>
    <scope>NUCLEOTIDE SEQUENCE [MRNA] (ISOFORM 1)</scope>
    <source>
        <tissue>Natural killer cell</tissue>
    </source>
</reference>
<reference key="2">
    <citation type="journal article" date="1995" name="Immunity">
        <title>Killer cell inhibitory receptors specific for HLA-C and HLA-B identified by direct binding and by functional transfer.</title>
        <authorList>
            <person name="Wagtmann N."/>
            <person name="Rajagopalan S."/>
            <person name="Winter C.C."/>
            <person name="Peruzzi M."/>
            <person name="Long E.O."/>
        </authorList>
    </citation>
    <scope>NUCLEOTIDE SEQUENCE [MRNA] (ISOFORM 1)</scope>
    <source>
        <tissue>Peripheral blood lymphocyte</tissue>
    </source>
</reference>
<reference key="3">
    <citation type="journal article" date="1996" name="J. Exp. Med.">
        <title>The natural killer cell receptor specific for HLA-A allotypes: a novel member of the p58/p70 family of inhibitory receptors that is characterized by three immunoglobulin-like domains and is expressed as a 140-kD disulphide-linked dimer.</title>
        <authorList>
            <person name="Pende D."/>
            <person name="Biassoni R."/>
            <person name="Cantoni C."/>
            <person name="Verdiani S."/>
            <person name="Falco M."/>
            <person name="di Donato C."/>
            <person name="Accame L."/>
            <person name="Bottino C."/>
            <person name="Moretta A."/>
            <person name="Moretta L."/>
        </authorList>
    </citation>
    <scope>NUCLEOTIDE SEQUENCE [MRNA] (ISOFORM 1)</scope>
    <source>
        <tissue>Peripheral blood lymphocyte</tissue>
    </source>
</reference>
<reference key="4">
    <citation type="journal article" date="1995" name="J. Immunol.">
        <title>Molecular cloning of NKB1. A natural killer cell receptor for HLA-B allotypes.</title>
        <authorList>
            <person name="D'Andrea A."/>
            <person name="Chang C."/>
            <person name="Franz-Bacon K."/>
            <person name="McClanahan T."/>
            <person name="Phillips J.H."/>
            <person name="Lanier L.L."/>
        </authorList>
    </citation>
    <scope>NUCLEOTIDE SEQUENCE [MRNA] (ISOFORM 1)</scope>
    <source>
        <tissue>Blood</tissue>
    </source>
</reference>
<reference key="5">
    <citation type="journal article" date="1997" name="Immunity">
        <title>Human diversity in killer cell inhibitory receptor genes.</title>
        <authorList>
            <person name="Uhrberg M."/>
            <person name="Valiante N.M."/>
            <person name="Shum B.P."/>
            <person name="Shilling H.G."/>
            <person name="Lienert-Weidenbach K."/>
            <person name="Corliss B."/>
            <person name="Tyan D."/>
            <person name="Lanier L.L."/>
            <person name="Parham P."/>
        </authorList>
    </citation>
    <scope>NUCLEOTIDE SEQUENCE [MRNA] (ISOFORM 1)</scope>
    <scope>VARIANTS</scope>
</reference>
<reference key="6">
    <citation type="journal article" date="1996" name="Immunogenetics">
        <title>Alternatively spliced forms of human killer inhibitory receptors.</title>
        <authorList>
            <person name="Doehring C."/>
            <person name="Samaridis J."/>
            <person name="Colonna M."/>
        </authorList>
    </citation>
    <scope>NUCLEOTIDE SEQUENCE [MRNA] (ISOFORM 2)</scope>
</reference>
<reference key="7">
    <citation type="journal article" date="2004" name="Nature">
        <title>The DNA sequence and biology of human chromosome 19.</title>
        <authorList>
            <person name="Grimwood J."/>
            <person name="Gordon L.A."/>
            <person name="Olsen A.S."/>
            <person name="Terry A."/>
            <person name="Schmutz J."/>
            <person name="Lamerdin J.E."/>
            <person name="Hellsten U."/>
            <person name="Goodstein D."/>
            <person name="Couronne O."/>
            <person name="Tran-Gyamfi M."/>
            <person name="Aerts A."/>
            <person name="Altherr M."/>
            <person name="Ashworth L."/>
            <person name="Bajorek E."/>
            <person name="Black S."/>
            <person name="Branscomb E."/>
            <person name="Caenepeel S."/>
            <person name="Carrano A.V."/>
            <person name="Caoile C."/>
            <person name="Chan Y.M."/>
            <person name="Christensen M."/>
            <person name="Cleland C.A."/>
            <person name="Copeland A."/>
            <person name="Dalin E."/>
            <person name="Dehal P."/>
            <person name="Denys M."/>
            <person name="Detter J.C."/>
            <person name="Escobar J."/>
            <person name="Flowers D."/>
            <person name="Fotopulos D."/>
            <person name="Garcia C."/>
            <person name="Georgescu A.M."/>
            <person name="Glavina T."/>
            <person name="Gomez M."/>
            <person name="Gonzales E."/>
            <person name="Groza M."/>
            <person name="Hammon N."/>
            <person name="Hawkins T."/>
            <person name="Haydu L."/>
            <person name="Ho I."/>
            <person name="Huang W."/>
            <person name="Israni S."/>
            <person name="Jett J."/>
            <person name="Kadner K."/>
            <person name="Kimball H."/>
            <person name="Kobayashi A."/>
            <person name="Larionov V."/>
            <person name="Leem S.-H."/>
            <person name="Lopez F."/>
            <person name="Lou Y."/>
            <person name="Lowry S."/>
            <person name="Malfatti S."/>
            <person name="Martinez D."/>
            <person name="McCready P.M."/>
            <person name="Medina C."/>
            <person name="Morgan J."/>
            <person name="Nelson K."/>
            <person name="Nolan M."/>
            <person name="Ovcharenko I."/>
            <person name="Pitluck S."/>
            <person name="Pollard M."/>
            <person name="Popkie A.P."/>
            <person name="Predki P."/>
            <person name="Quan G."/>
            <person name="Ramirez L."/>
            <person name="Rash S."/>
            <person name="Retterer J."/>
            <person name="Rodriguez A."/>
            <person name="Rogers S."/>
            <person name="Salamov A."/>
            <person name="Salazar A."/>
            <person name="She X."/>
            <person name="Smith D."/>
            <person name="Slezak T."/>
            <person name="Solovyev V."/>
            <person name="Thayer N."/>
            <person name="Tice H."/>
            <person name="Tsai M."/>
            <person name="Ustaszewska A."/>
            <person name="Vo N."/>
            <person name="Wagner M."/>
            <person name="Wheeler J."/>
            <person name="Wu K."/>
            <person name="Xie G."/>
            <person name="Yang J."/>
            <person name="Dubchak I."/>
            <person name="Furey T.S."/>
            <person name="DeJong P."/>
            <person name="Dickson M."/>
            <person name="Gordon D."/>
            <person name="Eichler E.E."/>
            <person name="Pennacchio L.A."/>
            <person name="Richardson P."/>
            <person name="Stubbs L."/>
            <person name="Rokhsar D.S."/>
            <person name="Myers R.M."/>
            <person name="Rubin E.M."/>
            <person name="Lucas S.M."/>
        </authorList>
    </citation>
    <scope>NUCLEOTIDE SEQUENCE [LARGE SCALE GENOMIC DNA]</scope>
</reference>
<reference key="8">
    <citation type="journal article" date="2011" name="Nature">
        <title>Killer cell immunoglobulin-like receptor 3DL1-mediated recognition of human leukocyte antigen B.</title>
        <authorList>
            <person name="Vivian J.P."/>
            <person name="Duncan R.C."/>
            <person name="Berry R."/>
            <person name="O'Connor G.M."/>
            <person name="Reid H.H."/>
            <person name="Beddoe T."/>
            <person name="Gras S."/>
            <person name="Saunders P.M."/>
            <person name="Olshina M.A."/>
            <person name="Widjaja J.M."/>
            <person name="Harpur C.M."/>
            <person name="Lin J."/>
            <person name="Maloveste S.M."/>
            <person name="Price D.A."/>
            <person name="Lafont B.A."/>
            <person name="McVicar D.W."/>
            <person name="Clements C.S."/>
            <person name="Brooks A.G."/>
            <person name="Rossjohn J."/>
        </authorList>
    </citation>
    <scope>X-RAY CRYSTALLOGRAPHY (1.8 ANGSTROMS) OF 22-320 IN COMPLEX WITH PEPTIDE-LOADED HLA-B</scope>
    <scope>FUNCTION</scope>
    <scope>GLYCOSYLATION AT ASN-92; ASN-179 AND ASN-273</scope>
    <scope>DISULFIDE BONDS</scope>
</reference>
<sequence length="444" mass="49098">MSLMVVSMACVGLFLVQRAGPHMGGQDKPFLSAWPSAVVPRGGHVTLRCHYRHRFNNFMLYKEDRIHIPIFHGRIFQESFNMSPVTTAHAGNYTCRGSHPHSPTGWSAPSNPVVIMVTGNHRKPSLLAHPGPLVKSGERVILQCWSDIMFEHFFLHKEGISKDPSRLVGQIHDGVSKANFSIGPMMLALAGTYRCYGSVTHTPYQLSAPSDPLDIVVTGPYEKPSLSAQPGPKVQAGESVTLSCSSRSSYDMYHLSREGGAHERRLPAVRKVNRTFQADFPLGPATHGGTYRCFGSFRHSPYEWSDPSDPLLVSVTGNPSSSWPSPTEPSSKSGNPRHLHILIGTSVVIILFILLLFFLLHLWCSNKKNAAVMDQEPAGNRTANSEDSDEQDPEEVTYAQLDHCVFTQRKITRPSQRPKTPPTDTILYTELPNAKPRSKVVSCP</sequence>
<gene>
    <name evidence="7" type="primary">KIR3DL1</name>
    <name type="synonym">CD158E</name>
    <name type="synonym">NKAT3</name>
    <name type="synonym">NKB1</name>
</gene>
<organism>
    <name type="scientific">Homo sapiens</name>
    <name type="common">Human</name>
    <dbReference type="NCBI Taxonomy" id="9606"/>
    <lineage>
        <taxon>Eukaryota</taxon>
        <taxon>Metazoa</taxon>
        <taxon>Chordata</taxon>
        <taxon>Craniata</taxon>
        <taxon>Vertebrata</taxon>
        <taxon>Euteleostomi</taxon>
        <taxon>Mammalia</taxon>
        <taxon>Eutheria</taxon>
        <taxon>Euarchontoglires</taxon>
        <taxon>Primates</taxon>
        <taxon>Haplorrhini</taxon>
        <taxon>Catarrhini</taxon>
        <taxon>Hominidae</taxon>
        <taxon>Homo</taxon>
    </lineage>
</organism>
<feature type="signal peptide" evidence="1">
    <location>
        <begin position="1"/>
        <end position="21"/>
    </location>
</feature>
<feature type="chain" id="PRO_0000015087" description="Killer cell immunoglobulin-like receptor 3DL1">
    <location>
        <begin position="22"/>
        <end position="444"/>
    </location>
</feature>
<feature type="topological domain" description="Extracellular" evidence="2">
    <location>
        <begin position="22"/>
        <end position="340"/>
    </location>
</feature>
<feature type="transmembrane region" description="Helical" evidence="2">
    <location>
        <begin position="341"/>
        <end position="360"/>
    </location>
</feature>
<feature type="topological domain" description="Cytoplasmic" evidence="2">
    <location>
        <begin position="361"/>
        <end position="444"/>
    </location>
</feature>
<feature type="domain" description="Ig-like C2-type 1">
    <location>
        <begin position="42"/>
        <end position="102"/>
    </location>
</feature>
<feature type="domain" description="Ig-like C2-type 2">
    <location>
        <begin position="137"/>
        <end position="202"/>
    </location>
</feature>
<feature type="domain" description="Ig-like C2-type 3">
    <location>
        <begin position="237"/>
        <end position="300"/>
    </location>
</feature>
<feature type="region of interest" description="Disordered" evidence="3">
    <location>
        <begin position="315"/>
        <end position="334"/>
    </location>
</feature>
<feature type="region of interest" description="Disordered" evidence="3">
    <location>
        <begin position="375"/>
        <end position="394"/>
    </location>
</feature>
<feature type="region of interest" description="Disordered" evidence="3">
    <location>
        <begin position="409"/>
        <end position="444"/>
    </location>
</feature>
<feature type="compositionally biased region" description="Low complexity" evidence="3">
    <location>
        <begin position="319"/>
        <end position="333"/>
    </location>
</feature>
<feature type="glycosylation site" description="N-linked (GlcNAc...) asparagine" evidence="4">
    <location>
        <position position="92"/>
    </location>
</feature>
<feature type="glycosylation site" description="N-linked (GlcNAc...) asparagine" evidence="4">
    <location>
        <position position="179"/>
    </location>
</feature>
<feature type="glycosylation site" description="N-linked (GlcNAc...) asparagine" evidence="4">
    <location>
        <position position="273"/>
    </location>
</feature>
<feature type="disulfide bond" evidence="4">
    <location>
        <begin position="49"/>
        <end position="95"/>
    </location>
</feature>
<feature type="disulfide bond" evidence="4">
    <location>
        <begin position="144"/>
        <end position="195"/>
    </location>
</feature>
<feature type="disulfide bond" evidence="4">
    <location>
        <begin position="244"/>
        <end position="293"/>
    </location>
</feature>
<feature type="splice variant" id="VSP_047633" description="In isoform 2." evidence="5">
    <location>
        <begin position="25"/>
        <end position="119"/>
    </location>
</feature>
<feature type="sequence variant" id="VAR_010319" description="In dbSNP:rs605219.">
    <original>S</original>
    <variation>L</variation>
    <location>
        <position position="2"/>
    </location>
</feature>
<feature type="sequence variant" id="VAR_010320" description="In dbSNP:rs1142881.">
    <original>L</original>
    <variation>F</variation>
    <location>
        <position position="13"/>
    </location>
</feature>
<feature type="sequence variant" id="VAR_010321" description="In dbSNP:rs1142882.">
    <original>M</original>
    <variation>V</variation>
    <location>
        <position position="23"/>
    </location>
</feature>
<feature type="sequence variant" id="VAR_010322" description="In dbSNP:rs643347.">
    <original>I</original>
    <variation>V</variation>
    <location>
        <position position="68"/>
    </location>
</feature>
<feature type="sequence variant" id="VAR_010323" description="In dbSNP:rs1049150.">
    <original>I</original>
    <variation>L</variation>
    <location>
        <position position="75"/>
    </location>
</feature>
<feature type="sequence variant" id="VAR_049987" description="In dbSNP:rs2273731.">
    <original>P</original>
    <variation>S</variation>
    <location>
        <position position="203"/>
    </location>
</feature>
<feature type="sequence variant" id="VAR_049988" description="In dbSNP:rs680891.">
    <original>P</original>
    <variation>L</variation>
    <location>
        <position position="220"/>
    </location>
</feature>
<feature type="sequence variant" id="VAR_010336" description="In dbSNP:rs1049215.">
    <original>G</original>
    <variation>R</variation>
    <location>
        <position position="259"/>
    </location>
</feature>
<feature type="sequence variant" id="VAR_010324">
    <original>S</original>
    <variation>C</variation>
    <location>
        <position position="333"/>
    </location>
</feature>
<feature type="sequence variant" id="VAR_049989" description="In dbSNP:rs1130468.">
    <original>L</original>
    <variation>R</variation>
    <location>
        <position position="362"/>
    </location>
</feature>
<feature type="sequence variant" id="VAR_049990" description="In dbSNP:rs1130513.">
    <original>E</original>
    <variation>Q</variation>
    <location>
        <position position="394"/>
    </location>
</feature>
<feature type="strand" evidence="8">
    <location>
        <begin position="30"/>
        <end position="35"/>
    </location>
</feature>
<feature type="strand" evidence="8">
    <location>
        <begin position="37"/>
        <end position="40"/>
    </location>
</feature>
<feature type="strand" evidence="8">
    <location>
        <begin position="45"/>
        <end position="51"/>
    </location>
</feature>
<feature type="strand" evidence="11">
    <location>
        <begin position="52"/>
        <end position="55"/>
    </location>
</feature>
<feature type="strand" evidence="8">
    <location>
        <begin position="57"/>
        <end position="64"/>
    </location>
</feature>
<feature type="strand" evidence="8">
    <location>
        <begin position="66"/>
        <end position="68"/>
    </location>
</feature>
<feature type="helix" evidence="8">
    <location>
        <begin position="70"/>
        <end position="73"/>
    </location>
</feature>
<feature type="strand" evidence="8">
    <location>
        <begin position="76"/>
        <end position="78"/>
    </location>
</feature>
<feature type="strand" evidence="8">
    <location>
        <begin position="80"/>
        <end position="82"/>
    </location>
</feature>
<feature type="helix" evidence="8">
    <location>
        <begin position="87"/>
        <end position="89"/>
    </location>
</feature>
<feature type="strand" evidence="8">
    <location>
        <begin position="91"/>
        <end position="98"/>
    </location>
</feature>
<feature type="strand" evidence="8">
    <location>
        <begin position="100"/>
        <end position="106"/>
    </location>
</feature>
<feature type="strand" evidence="8">
    <location>
        <begin position="113"/>
        <end position="118"/>
    </location>
</feature>
<feature type="strand" evidence="8">
    <location>
        <begin position="125"/>
        <end position="130"/>
    </location>
</feature>
<feature type="strand" evidence="8">
    <location>
        <begin position="132"/>
        <end position="135"/>
    </location>
</feature>
<feature type="strand" evidence="8">
    <location>
        <begin position="140"/>
        <end position="148"/>
    </location>
</feature>
<feature type="strand" evidence="8">
    <location>
        <begin position="151"/>
        <end position="157"/>
    </location>
</feature>
<feature type="strand" evidence="8">
    <location>
        <begin position="165"/>
        <end position="168"/>
    </location>
</feature>
<feature type="strand" evidence="8">
    <location>
        <begin position="170"/>
        <end position="172"/>
    </location>
</feature>
<feature type="strand" evidence="8">
    <location>
        <begin position="175"/>
        <end position="182"/>
    </location>
</feature>
<feature type="helix" evidence="8">
    <location>
        <begin position="187"/>
        <end position="189"/>
    </location>
</feature>
<feature type="strand" evidence="8">
    <location>
        <begin position="191"/>
        <end position="198"/>
    </location>
</feature>
<feature type="turn" evidence="11">
    <location>
        <begin position="202"/>
        <end position="204"/>
    </location>
</feature>
<feature type="strand" evidence="8">
    <location>
        <begin position="213"/>
        <end position="218"/>
    </location>
</feature>
<feature type="strand" evidence="8">
    <location>
        <begin position="225"/>
        <end position="230"/>
    </location>
</feature>
<feature type="strand" evidence="12">
    <location>
        <begin position="232"/>
        <end position="234"/>
    </location>
</feature>
<feature type="strand" evidence="8">
    <location>
        <begin position="241"/>
        <end position="248"/>
    </location>
</feature>
<feature type="strand" evidence="8">
    <location>
        <begin position="251"/>
        <end position="257"/>
    </location>
</feature>
<feature type="turn" evidence="9">
    <location>
        <begin position="258"/>
        <end position="260"/>
    </location>
</feature>
<feature type="strand" evidence="8">
    <location>
        <begin position="264"/>
        <end position="267"/>
    </location>
</feature>
<feature type="strand" evidence="13">
    <location>
        <begin position="269"/>
        <end position="271"/>
    </location>
</feature>
<feature type="strand" evidence="10">
    <location>
        <begin position="272"/>
        <end position="274"/>
    </location>
</feature>
<feature type="strand" evidence="8">
    <location>
        <begin position="276"/>
        <end position="281"/>
    </location>
</feature>
<feature type="strand" evidence="8">
    <location>
        <begin position="289"/>
        <end position="297"/>
    </location>
</feature>
<feature type="strand" evidence="10">
    <location>
        <begin position="300"/>
        <end position="304"/>
    </location>
</feature>
<feature type="strand" evidence="8">
    <location>
        <begin position="311"/>
        <end position="313"/>
    </location>
</feature>
<proteinExistence type="evidence at protein level"/>